<reference key="1">
    <citation type="journal article" date="2008" name="J. Bacteriol.">
        <title>Comparative genome sequence analysis of multidrug-resistant Acinetobacter baumannii.</title>
        <authorList>
            <person name="Adams M.D."/>
            <person name="Goglin K."/>
            <person name="Molyneaux N."/>
            <person name="Hujer K.M."/>
            <person name="Lavender H."/>
            <person name="Jamison J.J."/>
            <person name="MacDonald I.J."/>
            <person name="Martin K.M."/>
            <person name="Russo T."/>
            <person name="Campagnari A.A."/>
            <person name="Hujer A.M."/>
            <person name="Bonomo R.A."/>
            <person name="Gill S.R."/>
        </authorList>
    </citation>
    <scope>NUCLEOTIDE SEQUENCE [LARGE SCALE GENOMIC DNA]</scope>
    <source>
        <strain>AB0057</strain>
    </source>
</reference>
<evidence type="ECO:0000255" key="1">
    <source>
        <dbReference type="HAMAP-Rule" id="MF_00686"/>
    </source>
</evidence>
<proteinExistence type="inferred from homology"/>
<protein>
    <recommendedName>
        <fullName evidence="1">Probable Fe(2+)-trafficking protein</fullName>
    </recommendedName>
</protein>
<name>FETP_ACIB5</name>
<accession>B7I337</accession>
<comment type="function">
    <text evidence="1">Could be a mediator in iron transactions between iron acquisition and iron-requiring processes, such as synthesis and/or repair of Fe-S clusters in biosynthetic enzymes.</text>
</comment>
<comment type="similarity">
    <text evidence="1">Belongs to the Fe(2+)-trafficking protein family.</text>
</comment>
<keyword id="KW-0408">Iron</keyword>
<gene>
    <name type="ordered locus">AB57_0346</name>
</gene>
<dbReference type="EMBL" id="CP001182">
    <property type="protein sequence ID" value="ACJ39772.1"/>
    <property type="molecule type" value="Genomic_DNA"/>
</dbReference>
<dbReference type="RefSeq" id="WP_000089996.1">
    <property type="nucleotide sequence ID" value="NC_011586.2"/>
</dbReference>
<dbReference type="SMR" id="B7I337"/>
<dbReference type="KEGG" id="abn:AB57_0346"/>
<dbReference type="HOGENOM" id="CLU_170994_0_0_6"/>
<dbReference type="Proteomes" id="UP000007094">
    <property type="component" value="Chromosome"/>
</dbReference>
<dbReference type="GO" id="GO:0005829">
    <property type="term" value="C:cytosol"/>
    <property type="evidence" value="ECO:0007669"/>
    <property type="project" value="TreeGrafter"/>
</dbReference>
<dbReference type="GO" id="GO:0005506">
    <property type="term" value="F:iron ion binding"/>
    <property type="evidence" value="ECO:0007669"/>
    <property type="project" value="UniProtKB-UniRule"/>
</dbReference>
<dbReference type="GO" id="GO:0034599">
    <property type="term" value="P:cellular response to oxidative stress"/>
    <property type="evidence" value="ECO:0007669"/>
    <property type="project" value="TreeGrafter"/>
</dbReference>
<dbReference type="Gene3D" id="1.10.3880.10">
    <property type="entry name" value="Fe(II) trafficking protein YggX"/>
    <property type="match status" value="1"/>
</dbReference>
<dbReference type="HAMAP" id="MF_00686">
    <property type="entry name" value="Fe_traffic_YggX"/>
    <property type="match status" value="1"/>
</dbReference>
<dbReference type="InterPro" id="IPR007457">
    <property type="entry name" value="Fe_traffick_prot_YggX"/>
</dbReference>
<dbReference type="InterPro" id="IPR036766">
    <property type="entry name" value="Fe_traffick_prot_YggX_sf"/>
</dbReference>
<dbReference type="NCBIfam" id="NF003817">
    <property type="entry name" value="PRK05408.1"/>
    <property type="match status" value="1"/>
</dbReference>
<dbReference type="PANTHER" id="PTHR36965">
    <property type="entry name" value="FE(2+)-TRAFFICKING PROTEIN-RELATED"/>
    <property type="match status" value="1"/>
</dbReference>
<dbReference type="PANTHER" id="PTHR36965:SF1">
    <property type="entry name" value="FE(2+)-TRAFFICKING PROTEIN-RELATED"/>
    <property type="match status" value="1"/>
</dbReference>
<dbReference type="Pfam" id="PF04362">
    <property type="entry name" value="Iron_traffic"/>
    <property type="match status" value="1"/>
</dbReference>
<dbReference type="PIRSF" id="PIRSF029827">
    <property type="entry name" value="Fe_traffic_YggX"/>
    <property type="match status" value="1"/>
</dbReference>
<dbReference type="SUPFAM" id="SSF111148">
    <property type="entry name" value="YggX-like"/>
    <property type="match status" value="1"/>
</dbReference>
<feature type="chain" id="PRO_1000131816" description="Probable Fe(2+)-trafficking protein">
    <location>
        <begin position="1"/>
        <end position="89"/>
    </location>
</feature>
<organism>
    <name type="scientific">Acinetobacter baumannii (strain AB0057)</name>
    <dbReference type="NCBI Taxonomy" id="480119"/>
    <lineage>
        <taxon>Bacteria</taxon>
        <taxon>Pseudomonadati</taxon>
        <taxon>Pseudomonadota</taxon>
        <taxon>Gammaproteobacteria</taxon>
        <taxon>Moraxellales</taxon>
        <taxon>Moraxellaceae</taxon>
        <taxon>Acinetobacter</taxon>
        <taxon>Acinetobacter calcoaceticus/baumannii complex</taxon>
    </lineage>
</organism>
<sequence length="89" mass="10747">MSRQVFCRKYQKEMEGLDFAPFPGAKGQEFFENVSKQAWQEWLQHQTTLINEKRLNVFEPEAKKFLEEQREKFFNNDESVEKAEGWKPE</sequence>